<proteinExistence type="inferred from homology"/>
<dbReference type="EC" id="3.2.1.52" evidence="1"/>
<dbReference type="EMBL" id="CU468135">
    <property type="protein sequence ID" value="CAO97055.1"/>
    <property type="molecule type" value="Genomic_DNA"/>
</dbReference>
<dbReference type="SMR" id="B2VDM3"/>
<dbReference type="STRING" id="465817.ETA_20090"/>
<dbReference type="CAZy" id="GH3">
    <property type="family name" value="Glycoside Hydrolase Family 3"/>
</dbReference>
<dbReference type="KEGG" id="eta:ETA_20090"/>
<dbReference type="eggNOG" id="COG1472">
    <property type="taxonomic scope" value="Bacteria"/>
</dbReference>
<dbReference type="HOGENOM" id="CLU_008392_0_0_6"/>
<dbReference type="UniPathway" id="UPA00544"/>
<dbReference type="Proteomes" id="UP000001726">
    <property type="component" value="Chromosome"/>
</dbReference>
<dbReference type="GO" id="GO:0005737">
    <property type="term" value="C:cytoplasm"/>
    <property type="evidence" value="ECO:0007669"/>
    <property type="project" value="UniProtKB-SubCell"/>
</dbReference>
<dbReference type="GO" id="GO:0004563">
    <property type="term" value="F:beta-N-acetylhexosaminidase activity"/>
    <property type="evidence" value="ECO:0007669"/>
    <property type="project" value="UniProtKB-UniRule"/>
</dbReference>
<dbReference type="GO" id="GO:0005975">
    <property type="term" value="P:carbohydrate metabolic process"/>
    <property type="evidence" value="ECO:0007669"/>
    <property type="project" value="InterPro"/>
</dbReference>
<dbReference type="GO" id="GO:0051301">
    <property type="term" value="P:cell division"/>
    <property type="evidence" value="ECO:0007669"/>
    <property type="project" value="UniProtKB-KW"/>
</dbReference>
<dbReference type="GO" id="GO:0071555">
    <property type="term" value="P:cell wall organization"/>
    <property type="evidence" value="ECO:0007669"/>
    <property type="project" value="UniProtKB-KW"/>
</dbReference>
<dbReference type="GO" id="GO:0009252">
    <property type="term" value="P:peptidoglycan biosynthetic process"/>
    <property type="evidence" value="ECO:0007669"/>
    <property type="project" value="UniProtKB-KW"/>
</dbReference>
<dbReference type="GO" id="GO:0009254">
    <property type="term" value="P:peptidoglycan turnover"/>
    <property type="evidence" value="ECO:0007669"/>
    <property type="project" value="UniProtKB-UniRule"/>
</dbReference>
<dbReference type="GO" id="GO:0008360">
    <property type="term" value="P:regulation of cell shape"/>
    <property type="evidence" value="ECO:0007669"/>
    <property type="project" value="UniProtKB-KW"/>
</dbReference>
<dbReference type="FunFam" id="3.20.20.300:FF:000001">
    <property type="entry name" value="Beta-hexosaminidase"/>
    <property type="match status" value="1"/>
</dbReference>
<dbReference type="Gene3D" id="3.20.20.300">
    <property type="entry name" value="Glycoside hydrolase, family 3, N-terminal domain"/>
    <property type="match status" value="1"/>
</dbReference>
<dbReference type="HAMAP" id="MF_00364">
    <property type="entry name" value="NagZ"/>
    <property type="match status" value="1"/>
</dbReference>
<dbReference type="InterPro" id="IPR022956">
    <property type="entry name" value="Beta_hexosaminidase_bac"/>
</dbReference>
<dbReference type="InterPro" id="IPR019800">
    <property type="entry name" value="Glyco_hydro_3_AS"/>
</dbReference>
<dbReference type="InterPro" id="IPR001764">
    <property type="entry name" value="Glyco_hydro_3_N"/>
</dbReference>
<dbReference type="InterPro" id="IPR036962">
    <property type="entry name" value="Glyco_hydro_3_N_sf"/>
</dbReference>
<dbReference type="InterPro" id="IPR017853">
    <property type="entry name" value="Glycoside_hydrolase_SF"/>
</dbReference>
<dbReference type="InterPro" id="IPR050226">
    <property type="entry name" value="NagZ_Beta-hexosaminidase"/>
</dbReference>
<dbReference type="NCBIfam" id="NF003740">
    <property type="entry name" value="PRK05337.1"/>
    <property type="match status" value="1"/>
</dbReference>
<dbReference type="PANTHER" id="PTHR30480:SF13">
    <property type="entry name" value="BETA-HEXOSAMINIDASE"/>
    <property type="match status" value="1"/>
</dbReference>
<dbReference type="PANTHER" id="PTHR30480">
    <property type="entry name" value="BETA-HEXOSAMINIDASE-RELATED"/>
    <property type="match status" value="1"/>
</dbReference>
<dbReference type="Pfam" id="PF00933">
    <property type="entry name" value="Glyco_hydro_3"/>
    <property type="match status" value="1"/>
</dbReference>
<dbReference type="SUPFAM" id="SSF51445">
    <property type="entry name" value="(Trans)glycosidases"/>
    <property type="match status" value="1"/>
</dbReference>
<dbReference type="PROSITE" id="PS00775">
    <property type="entry name" value="GLYCOSYL_HYDROL_F3"/>
    <property type="match status" value="1"/>
</dbReference>
<keyword id="KW-0131">Cell cycle</keyword>
<keyword id="KW-0132">Cell division</keyword>
<keyword id="KW-0133">Cell shape</keyword>
<keyword id="KW-0961">Cell wall biogenesis/degradation</keyword>
<keyword id="KW-0963">Cytoplasm</keyword>
<keyword id="KW-0326">Glycosidase</keyword>
<keyword id="KW-0378">Hydrolase</keyword>
<keyword id="KW-0573">Peptidoglycan synthesis</keyword>
<keyword id="KW-1185">Reference proteome</keyword>
<evidence type="ECO:0000255" key="1">
    <source>
        <dbReference type="HAMAP-Rule" id="MF_00364"/>
    </source>
</evidence>
<evidence type="ECO:0000256" key="2">
    <source>
        <dbReference type="SAM" id="MobiDB-lite"/>
    </source>
</evidence>
<gene>
    <name evidence="1" type="primary">nagZ</name>
    <name type="ordered locus">ETA_20090</name>
</gene>
<sequence>MGPVMLDVLGCELDAEEREILQHPLTGGLILFSRNYHDPAQLRELVRQIRAASRHRLVVAVDQEGGRVQRFREGFTRLPAMQAFSALNPSAEAETLAQQAGWLMASEMIAMDIDISFAPVLDIGYGSAAIGERSFHEDPAIALQMARCFIRGMREAGMKTTGKHFPGHGAVSADSHKETPRDTRSEAEIRRHDMPIFQQLIAERALDAIMPAHVIYTEVDPRPASGSSHWLKTVLRQELGFDGVIFSDDLSMEGAAIMGSYAERGQAALDAGCDMILVCNNREGAVSVLDNLPAMEADRVARLYHRGDFTRQQLIDSSRWKETSVALDRLQGRWLNHKAAAGR</sequence>
<comment type="function">
    <text evidence="1">Plays a role in peptidoglycan recycling by cleaving the terminal beta-1,4-linked N-acetylglucosamine (GlcNAc) from peptide-linked peptidoglycan fragments, giving rise to free GlcNAc, anhydro-N-acetylmuramic acid and anhydro-N-acetylmuramic acid-linked peptides.</text>
</comment>
<comment type="catalytic activity">
    <reaction evidence="1">
        <text>Hydrolysis of terminal non-reducing N-acetyl-D-hexosamine residues in N-acetyl-beta-D-hexosaminides.</text>
        <dbReference type="EC" id="3.2.1.52"/>
    </reaction>
</comment>
<comment type="pathway">
    <text evidence="1">Cell wall biogenesis; peptidoglycan recycling.</text>
</comment>
<comment type="subcellular location">
    <subcellularLocation>
        <location evidence="1">Cytoplasm</location>
    </subcellularLocation>
</comment>
<comment type="similarity">
    <text evidence="1">Belongs to the glycosyl hydrolase 3 family. NagZ subfamily.</text>
</comment>
<feature type="chain" id="PRO_1000121061" description="Beta-hexosaminidase">
    <location>
        <begin position="1"/>
        <end position="343"/>
    </location>
</feature>
<feature type="region of interest" description="Disordered" evidence="2">
    <location>
        <begin position="161"/>
        <end position="187"/>
    </location>
</feature>
<feature type="compositionally biased region" description="Basic and acidic residues" evidence="2">
    <location>
        <begin position="174"/>
        <end position="187"/>
    </location>
</feature>
<feature type="active site" description="Proton donor/acceptor" evidence="1">
    <location>
        <position position="176"/>
    </location>
</feature>
<feature type="active site" description="Nucleophile" evidence="1">
    <location>
        <position position="248"/>
    </location>
</feature>
<feature type="binding site" evidence="1">
    <location>
        <position position="62"/>
    </location>
    <ligand>
        <name>substrate</name>
    </ligand>
</feature>
<feature type="binding site" evidence="1">
    <location>
        <position position="70"/>
    </location>
    <ligand>
        <name>substrate</name>
    </ligand>
</feature>
<feature type="binding site" evidence="1">
    <location>
        <position position="133"/>
    </location>
    <ligand>
        <name>substrate</name>
    </ligand>
</feature>
<feature type="binding site" evidence="1">
    <location>
        <begin position="163"/>
        <end position="164"/>
    </location>
    <ligand>
        <name>substrate</name>
    </ligand>
</feature>
<feature type="site" description="Important for catalytic activity" evidence="1">
    <location>
        <position position="174"/>
    </location>
</feature>
<name>NAGZ_ERWT9</name>
<accession>B2VDM3</accession>
<protein>
    <recommendedName>
        <fullName evidence="1">Beta-hexosaminidase</fullName>
        <ecNumber evidence="1">3.2.1.52</ecNumber>
    </recommendedName>
    <alternativeName>
        <fullName evidence="1">Beta-N-acetylhexosaminidase</fullName>
    </alternativeName>
    <alternativeName>
        <fullName evidence="1">N-acetyl-beta-glucosaminidase</fullName>
    </alternativeName>
</protein>
<reference key="1">
    <citation type="journal article" date="2008" name="Environ. Microbiol.">
        <title>The genome of Erwinia tasmaniensis strain Et1/99, a non-pathogenic bacterium in the genus Erwinia.</title>
        <authorList>
            <person name="Kube M."/>
            <person name="Migdoll A.M."/>
            <person name="Mueller I."/>
            <person name="Kuhl H."/>
            <person name="Beck A."/>
            <person name="Reinhardt R."/>
            <person name="Geider K."/>
        </authorList>
    </citation>
    <scope>NUCLEOTIDE SEQUENCE [LARGE SCALE GENOMIC DNA]</scope>
    <source>
        <strain>DSM 17950 / CFBP 7177 / CIP 109463 / NCPPB 4357 / Et1/99</strain>
    </source>
</reference>
<organism>
    <name type="scientific">Erwinia tasmaniensis (strain DSM 17950 / CFBP 7177 / CIP 109463 / NCPPB 4357 / Et1/99)</name>
    <dbReference type="NCBI Taxonomy" id="465817"/>
    <lineage>
        <taxon>Bacteria</taxon>
        <taxon>Pseudomonadati</taxon>
        <taxon>Pseudomonadota</taxon>
        <taxon>Gammaproteobacteria</taxon>
        <taxon>Enterobacterales</taxon>
        <taxon>Erwiniaceae</taxon>
        <taxon>Erwinia</taxon>
    </lineage>
</organism>